<proteinExistence type="inferred from homology"/>
<dbReference type="EC" id="3.5.3.6" evidence="1"/>
<dbReference type="EMBL" id="CP000020">
    <property type="protein sequence ID" value="AAW84903.1"/>
    <property type="molecule type" value="Genomic_DNA"/>
</dbReference>
<dbReference type="RefSeq" id="WP_011261199.1">
    <property type="nucleotide sequence ID" value="NC_006840.2"/>
</dbReference>
<dbReference type="RefSeq" id="YP_203791.1">
    <property type="nucleotide sequence ID" value="NC_006840.2"/>
</dbReference>
<dbReference type="SMR" id="Q5E7U3"/>
<dbReference type="STRING" id="312309.VF_0408"/>
<dbReference type="EnsemblBacteria" id="AAW84903">
    <property type="protein sequence ID" value="AAW84903"/>
    <property type="gene ID" value="VF_0408"/>
</dbReference>
<dbReference type="GeneID" id="54163035"/>
<dbReference type="KEGG" id="vfi:VF_0408"/>
<dbReference type="PATRIC" id="fig|312309.11.peg.398"/>
<dbReference type="eggNOG" id="COG2235">
    <property type="taxonomic scope" value="Bacteria"/>
</dbReference>
<dbReference type="HOGENOM" id="CLU_052662_0_0_6"/>
<dbReference type="OrthoDB" id="9807502at2"/>
<dbReference type="UniPathway" id="UPA00254">
    <property type="reaction ID" value="UER00364"/>
</dbReference>
<dbReference type="Proteomes" id="UP000000537">
    <property type="component" value="Chromosome I"/>
</dbReference>
<dbReference type="GO" id="GO:0005737">
    <property type="term" value="C:cytoplasm"/>
    <property type="evidence" value="ECO:0007669"/>
    <property type="project" value="UniProtKB-SubCell"/>
</dbReference>
<dbReference type="GO" id="GO:0016990">
    <property type="term" value="F:arginine deiminase activity"/>
    <property type="evidence" value="ECO:0007669"/>
    <property type="project" value="UniProtKB-UniRule"/>
</dbReference>
<dbReference type="GO" id="GO:0019547">
    <property type="term" value="P:arginine catabolic process to ornithine"/>
    <property type="evidence" value="ECO:0007669"/>
    <property type="project" value="UniProtKB-UniRule"/>
</dbReference>
<dbReference type="GO" id="GO:0019546">
    <property type="term" value="P:arginine deiminase pathway"/>
    <property type="evidence" value="ECO:0007669"/>
    <property type="project" value="TreeGrafter"/>
</dbReference>
<dbReference type="GO" id="GO:0008218">
    <property type="term" value="P:bioluminescence"/>
    <property type="evidence" value="ECO:0000315"/>
    <property type="project" value="CACAO"/>
</dbReference>
<dbReference type="FunFam" id="1.10.3930.10:FF:000002">
    <property type="entry name" value="Arginine deiminase"/>
    <property type="match status" value="1"/>
</dbReference>
<dbReference type="Gene3D" id="1.10.3930.10">
    <property type="entry name" value="Arginine deiminase"/>
    <property type="match status" value="1"/>
</dbReference>
<dbReference type="Gene3D" id="3.75.10.10">
    <property type="entry name" value="L-arginine/glycine Amidinotransferase, Chain A"/>
    <property type="match status" value="1"/>
</dbReference>
<dbReference type="HAMAP" id="MF_00242">
    <property type="entry name" value="Arg_deiminase"/>
    <property type="match status" value="1"/>
</dbReference>
<dbReference type="InterPro" id="IPR003876">
    <property type="entry name" value="Arg_deiminase"/>
</dbReference>
<dbReference type="NCBIfam" id="TIGR01078">
    <property type="entry name" value="arcA"/>
    <property type="match status" value="1"/>
</dbReference>
<dbReference type="NCBIfam" id="NF002381">
    <property type="entry name" value="PRK01388.1"/>
    <property type="match status" value="1"/>
</dbReference>
<dbReference type="PANTHER" id="PTHR47271">
    <property type="entry name" value="ARGININE DEIMINASE"/>
    <property type="match status" value="1"/>
</dbReference>
<dbReference type="PANTHER" id="PTHR47271:SF2">
    <property type="entry name" value="ARGININE DEIMINASE"/>
    <property type="match status" value="1"/>
</dbReference>
<dbReference type="Pfam" id="PF02274">
    <property type="entry name" value="ADI"/>
    <property type="match status" value="1"/>
</dbReference>
<dbReference type="PIRSF" id="PIRSF006356">
    <property type="entry name" value="Arg_deiminase"/>
    <property type="match status" value="1"/>
</dbReference>
<dbReference type="PRINTS" id="PR01466">
    <property type="entry name" value="ARGDEIMINASE"/>
</dbReference>
<dbReference type="SUPFAM" id="SSF55909">
    <property type="entry name" value="Pentein"/>
    <property type="match status" value="1"/>
</dbReference>
<evidence type="ECO:0000255" key="1">
    <source>
        <dbReference type="HAMAP-Rule" id="MF_00242"/>
    </source>
</evidence>
<accession>Q5E7U3</accession>
<organism>
    <name type="scientific">Aliivibrio fischeri (strain ATCC 700601 / ES114)</name>
    <name type="common">Vibrio fischeri</name>
    <dbReference type="NCBI Taxonomy" id="312309"/>
    <lineage>
        <taxon>Bacteria</taxon>
        <taxon>Pseudomonadati</taxon>
        <taxon>Pseudomonadota</taxon>
        <taxon>Gammaproteobacteria</taxon>
        <taxon>Vibrionales</taxon>
        <taxon>Vibrionaceae</taxon>
        <taxon>Aliivibrio</taxon>
    </lineage>
</organism>
<name>ARCA_ALIF1</name>
<comment type="catalytic activity">
    <reaction evidence="1">
        <text>L-arginine + H2O = L-citrulline + NH4(+)</text>
        <dbReference type="Rhea" id="RHEA:19597"/>
        <dbReference type="ChEBI" id="CHEBI:15377"/>
        <dbReference type="ChEBI" id="CHEBI:28938"/>
        <dbReference type="ChEBI" id="CHEBI:32682"/>
        <dbReference type="ChEBI" id="CHEBI:57743"/>
        <dbReference type="EC" id="3.5.3.6"/>
    </reaction>
</comment>
<comment type="pathway">
    <text evidence="1">Amino-acid degradation; L-arginine degradation via ADI pathway; carbamoyl phosphate from L-arginine: step 1/2.</text>
</comment>
<comment type="subcellular location">
    <subcellularLocation>
        <location evidence="1">Cytoplasm</location>
    </subcellularLocation>
</comment>
<comment type="similarity">
    <text evidence="1">Belongs to the arginine deiminase family.</text>
</comment>
<protein>
    <recommendedName>
        <fullName evidence="1">Arginine deiminase</fullName>
        <shortName evidence="1">ADI</shortName>
        <ecNumber evidence="1">3.5.3.6</ecNumber>
    </recommendedName>
    <alternativeName>
        <fullName evidence="1">Arginine dihydrolase</fullName>
        <shortName evidence="1">AD</shortName>
    </alternativeName>
</protein>
<keyword id="KW-0056">Arginine metabolism</keyword>
<keyword id="KW-0963">Cytoplasm</keyword>
<keyword id="KW-0378">Hydrolase</keyword>
<keyword id="KW-1185">Reference proteome</keyword>
<feature type="chain" id="PRO_1000100752" description="Arginine deiminase">
    <location>
        <begin position="1"/>
        <end position="406"/>
    </location>
</feature>
<feature type="active site" description="Amidino-cysteine intermediate" evidence="1">
    <location>
        <position position="396"/>
    </location>
</feature>
<sequence>MNKLFVGSEIGQLRRVILHRPERALSHLTPTNCHNLLFDDVLSVEKALLEHDQFVKTLENQDVDVLLLQDLLEQTLENPEAKEWLLKHQISHYRFGPTFANQIRVFLLEHSNKELASILLGGLAFIELPFKAPSMLQQLSDPFDFVIAPLPNHLFTRDTSCWIYGGVSINPMAKAARKRESNHLRAIYRWHPLFSHHDFARYFEDENRYYDNATIEGGDVLVIGKGNVLVGISERTTPQGIENLAKQLFRTHQAKQVIAIKLPEDRSCMHLDTVMTHMDHNVFSVYPRVIDKNMGCWSITPCGEQHLDIKEMPNFQNVLMSALELDNLNIITTGGDSYEAEREQWHDANNVLTIKPGVVVAYERNTYTNEKYDKAGIHVLPITGDELGRGRGGARCMSCPIERDGI</sequence>
<gene>
    <name evidence="1" type="primary">arcA</name>
    <name type="ordered locus">VF_0408</name>
</gene>
<reference key="1">
    <citation type="journal article" date="2005" name="Proc. Natl. Acad. Sci. U.S.A.">
        <title>Complete genome sequence of Vibrio fischeri: a symbiotic bacterium with pathogenic congeners.</title>
        <authorList>
            <person name="Ruby E.G."/>
            <person name="Urbanowski M."/>
            <person name="Campbell J."/>
            <person name="Dunn A."/>
            <person name="Faini M."/>
            <person name="Gunsalus R."/>
            <person name="Lostroh P."/>
            <person name="Lupp C."/>
            <person name="McCann J."/>
            <person name="Millikan D."/>
            <person name="Schaefer A."/>
            <person name="Stabb E."/>
            <person name="Stevens A."/>
            <person name="Visick K."/>
            <person name="Whistler C."/>
            <person name="Greenberg E.P."/>
        </authorList>
    </citation>
    <scope>NUCLEOTIDE SEQUENCE [LARGE SCALE GENOMIC DNA]</scope>
    <source>
        <strain>ATCC 700601 / ES114</strain>
    </source>
</reference>